<proteinExistence type="evidence at protein level"/>
<dbReference type="EC" id="1.7.1.7" evidence="1"/>
<dbReference type="EMBL" id="AK002326">
    <property type="protein sequence ID" value="BAB22014.1"/>
    <property type="molecule type" value="mRNA"/>
</dbReference>
<dbReference type="EMBL" id="AK084508">
    <property type="protein sequence ID" value="BAC39203.1"/>
    <property type="molecule type" value="mRNA"/>
</dbReference>
<dbReference type="EMBL" id="BC010827">
    <property type="protein sequence ID" value="AAH10827.1"/>
    <property type="molecule type" value="mRNA"/>
</dbReference>
<dbReference type="CCDS" id="CCDS26482.1"/>
<dbReference type="RefSeq" id="NP_079784.1">
    <property type="nucleotide sequence ID" value="NM_025508.5"/>
</dbReference>
<dbReference type="SMR" id="Q9DCZ1"/>
<dbReference type="FunCoup" id="Q9DCZ1">
    <property type="interactions" value="163"/>
</dbReference>
<dbReference type="STRING" id="10090.ENSMUSP00000000260"/>
<dbReference type="GlyGen" id="Q9DCZ1">
    <property type="glycosylation" value="1 site, 1 O-linked glycan (1 site)"/>
</dbReference>
<dbReference type="iPTMnet" id="Q9DCZ1"/>
<dbReference type="PhosphoSitePlus" id="Q9DCZ1"/>
<dbReference type="SwissPalm" id="Q9DCZ1"/>
<dbReference type="CPTAC" id="non-CPTAC-3648"/>
<dbReference type="jPOST" id="Q9DCZ1"/>
<dbReference type="PaxDb" id="10090-ENSMUSP00000000260"/>
<dbReference type="PeptideAtlas" id="Q9DCZ1"/>
<dbReference type="ProteomicsDB" id="271409"/>
<dbReference type="Pumba" id="Q9DCZ1"/>
<dbReference type="Antibodypedia" id="10292">
    <property type="antibodies" value="161 antibodies from 21 providers"/>
</dbReference>
<dbReference type="DNASU" id="66355"/>
<dbReference type="Ensembl" id="ENSMUST00000000260.13">
    <property type="protein sequence ID" value="ENSMUSP00000000260.6"/>
    <property type="gene ID" value="ENSMUSG00000000253.14"/>
</dbReference>
<dbReference type="GeneID" id="66355"/>
<dbReference type="KEGG" id="mmu:66355"/>
<dbReference type="UCSC" id="uc007qha.1">
    <property type="organism name" value="mouse"/>
</dbReference>
<dbReference type="AGR" id="MGI:1913605"/>
<dbReference type="CTD" id="2766"/>
<dbReference type="MGI" id="MGI:1913605">
    <property type="gene designation" value="Gmpr"/>
</dbReference>
<dbReference type="VEuPathDB" id="HostDB:ENSMUSG00000000253"/>
<dbReference type="eggNOG" id="KOG2550">
    <property type="taxonomic scope" value="Eukaryota"/>
</dbReference>
<dbReference type="GeneTree" id="ENSGT00940000156595"/>
<dbReference type="HOGENOM" id="CLU_022552_5_3_1"/>
<dbReference type="InParanoid" id="Q9DCZ1"/>
<dbReference type="OMA" id="AYKEYFG"/>
<dbReference type="OrthoDB" id="418595at2759"/>
<dbReference type="PhylomeDB" id="Q9DCZ1"/>
<dbReference type="TreeFam" id="TF300378"/>
<dbReference type="Reactome" id="R-MMU-74217">
    <property type="pathway name" value="Purine salvage"/>
</dbReference>
<dbReference type="BioGRID-ORCS" id="66355">
    <property type="hits" value="3 hits in 78 CRISPR screens"/>
</dbReference>
<dbReference type="PRO" id="PR:Q9DCZ1"/>
<dbReference type="Proteomes" id="UP000000589">
    <property type="component" value="Chromosome 13"/>
</dbReference>
<dbReference type="RNAct" id="Q9DCZ1">
    <property type="molecule type" value="protein"/>
</dbReference>
<dbReference type="Bgee" id="ENSMUSG00000000253">
    <property type="expression patterns" value="Expressed in fetal liver hematopoietic progenitor cell and 256 other cell types or tissues"/>
</dbReference>
<dbReference type="ExpressionAtlas" id="Q9DCZ1">
    <property type="expression patterns" value="baseline and differential"/>
</dbReference>
<dbReference type="GO" id="GO:1902560">
    <property type="term" value="C:GMP reductase complex"/>
    <property type="evidence" value="ECO:0007669"/>
    <property type="project" value="InterPro"/>
</dbReference>
<dbReference type="GO" id="GO:0003920">
    <property type="term" value="F:GMP reductase activity"/>
    <property type="evidence" value="ECO:0000266"/>
    <property type="project" value="MGI"/>
</dbReference>
<dbReference type="GO" id="GO:0046872">
    <property type="term" value="F:metal ion binding"/>
    <property type="evidence" value="ECO:0007669"/>
    <property type="project" value="UniProtKB-KW"/>
</dbReference>
<dbReference type="GO" id="GO:0032264">
    <property type="term" value="P:IMP salvage"/>
    <property type="evidence" value="ECO:0000266"/>
    <property type="project" value="MGI"/>
</dbReference>
<dbReference type="GO" id="GO:0006144">
    <property type="term" value="P:purine nucleobase metabolic process"/>
    <property type="evidence" value="ECO:0007669"/>
    <property type="project" value="UniProtKB-KW"/>
</dbReference>
<dbReference type="CDD" id="cd00381">
    <property type="entry name" value="IMPDH"/>
    <property type="match status" value="1"/>
</dbReference>
<dbReference type="FunFam" id="3.20.20.70:FF:000012">
    <property type="entry name" value="GMP reductase"/>
    <property type="match status" value="1"/>
</dbReference>
<dbReference type="Gene3D" id="3.20.20.70">
    <property type="entry name" value="Aldolase class I"/>
    <property type="match status" value="1"/>
</dbReference>
<dbReference type="HAMAP" id="MF_00596">
    <property type="entry name" value="GMP_reduct_type1"/>
    <property type="match status" value="1"/>
</dbReference>
<dbReference type="InterPro" id="IPR013785">
    <property type="entry name" value="Aldolase_TIM"/>
</dbReference>
<dbReference type="InterPro" id="IPR050139">
    <property type="entry name" value="GMP_reductase"/>
</dbReference>
<dbReference type="InterPro" id="IPR005993">
    <property type="entry name" value="GMPR"/>
</dbReference>
<dbReference type="InterPro" id="IPR015875">
    <property type="entry name" value="IMP_DH/GMP_Rdtase_CS"/>
</dbReference>
<dbReference type="InterPro" id="IPR001093">
    <property type="entry name" value="IMP_DH_GMPRt"/>
</dbReference>
<dbReference type="NCBIfam" id="TIGR01305">
    <property type="entry name" value="GMP_reduct_1"/>
    <property type="match status" value="1"/>
</dbReference>
<dbReference type="NCBIfam" id="NF003470">
    <property type="entry name" value="PRK05096.1"/>
    <property type="match status" value="1"/>
</dbReference>
<dbReference type="PANTHER" id="PTHR43170">
    <property type="entry name" value="GMP REDUCTASE"/>
    <property type="match status" value="1"/>
</dbReference>
<dbReference type="PANTHER" id="PTHR43170:SF3">
    <property type="entry name" value="GMP REDUCTASE 1"/>
    <property type="match status" value="1"/>
</dbReference>
<dbReference type="Pfam" id="PF00478">
    <property type="entry name" value="IMPDH"/>
    <property type="match status" value="1"/>
</dbReference>
<dbReference type="PIRSF" id="PIRSF000235">
    <property type="entry name" value="GMP_reductase"/>
    <property type="match status" value="1"/>
</dbReference>
<dbReference type="SMART" id="SM01240">
    <property type="entry name" value="IMPDH"/>
    <property type="match status" value="1"/>
</dbReference>
<dbReference type="SUPFAM" id="SSF51412">
    <property type="entry name" value="Inosine monophosphate dehydrogenase (IMPDH)"/>
    <property type="match status" value="1"/>
</dbReference>
<dbReference type="PROSITE" id="PS00487">
    <property type="entry name" value="IMP_DH_GMP_RED"/>
    <property type="match status" value="1"/>
</dbReference>
<gene>
    <name type="primary">Gmpr</name>
    <name evidence="1" type="synonym">Gmpr1</name>
</gene>
<reference key="1">
    <citation type="journal article" date="2005" name="Science">
        <title>The transcriptional landscape of the mammalian genome.</title>
        <authorList>
            <person name="Carninci P."/>
            <person name="Kasukawa T."/>
            <person name="Katayama S."/>
            <person name="Gough J."/>
            <person name="Frith M.C."/>
            <person name="Maeda N."/>
            <person name="Oyama R."/>
            <person name="Ravasi T."/>
            <person name="Lenhard B."/>
            <person name="Wells C."/>
            <person name="Kodzius R."/>
            <person name="Shimokawa K."/>
            <person name="Bajic V.B."/>
            <person name="Brenner S.E."/>
            <person name="Batalov S."/>
            <person name="Forrest A.R."/>
            <person name="Zavolan M."/>
            <person name="Davis M.J."/>
            <person name="Wilming L.G."/>
            <person name="Aidinis V."/>
            <person name="Allen J.E."/>
            <person name="Ambesi-Impiombato A."/>
            <person name="Apweiler R."/>
            <person name="Aturaliya R.N."/>
            <person name="Bailey T.L."/>
            <person name="Bansal M."/>
            <person name="Baxter L."/>
            <person name="Beisel K.W."/>
            <person name="Bersano T."/>
            <person name="Bono H."/>
            <person name="Chalk A.M."/>
            <person name="Chiu K.P."/>
            <person name="Choudhary V."/>
            <person name="Christoffels A."/>
            <person name="Clutterbuck D.R."/>
            <person name="Crowe M.L."/>
            <person name="Dalla E."/>
            <person name="Dalrymple B.P."/>
            <person name="de Bono B."/>
            <person name="Della Gatta G."/>
            <person name="di Bernardo D."/>
            <person name="Down T."/>
            <person name="Engstrom P."/>
            <person name="Fagiolini M."/>
            <person name="Faulkner G."/>
            <person name="Fletcher C.F."/>
            <person name="Fukushima T."/>
            <person name="Furuno M."/>
            <person name="Futaki S."/>
            <person name="Gariboldi M."/>
            <person name="Georgii-Hemming P."/>
            <person name="Gingeras T.R."/>
            <person name="Gojobori T."/>
            <person name="Green R.E."/>
            <person name="Gustincich S."/>
            <person name="Harbers M."/>
            <person name="Hayashi Y."/>
            <person name="Hensch T.K."/>
            <person name="Hirokawa N."/>
            <person name="Hill D."/>
            <person name="Huminiecki L."/>
            <person name="Iacono M."/>
            <person name="Ikeo K."/>
            <person name="Iwama A."/>
            <person name="Ishikawa T."/>
            <person name="Jakt M."/>
            <person name="Kanapin A."/>
            <person name="Katoh M."/>
            <person name="Kawasawa Y."/>
            <person name="Kelso J."/>
            <person name="Kitamura H."/>
            <person name="Kitano H."/>
            <person name="Kollias G."/>
            <person name="Krishnan S.P."/>
            <person name="Kruger A."/>
            <person name="Kummerfeld S.K."/>
            <person name="Kurochkin I.V."/>
            <person name="Lareau L.F."/>
            <person name="Lazarevic D."/>
            <person name="Lipovich L."/>
            <person name="Liu J."/>
            <person name="Liuni S."/>
            <person name="McWilliam S."/>
            <person name="Madan Babu M."/>
            <person name="Madera M."/>
            <person name="Marchionni L."/>
            <person name="Matsuda H."/>
            <person name="Matsuzawa S."/>
            <person name="Miki H."/>
            <person name="Mignone F."/>
            <person name="Miyake S."/>
            <person name="Morris K."/>
            <person name="Mottagui-Tabar S."/>
            <person name="Mulder N."/>
            <person name="Nakano N."/>
            <person name="Nakauchi H."/>
            <person name="Ng P."/>
            <person name="Nilsson R."/>
            <person name="Nishiguchi S."/>
            <person name="Nishikawa S."/>
            <person name="Nori F."/>
            <person name="Ohara O."/>
            <person name="Okazaki Y."/>
            <person name="Orlando V."/>
            <person name="Pang K.C."/>
            <person name="Pavan W.J."/>
            <person name="Pavesi G."/>
            <person name="Pesole G."/>
            <person name="Petrovsky N."/>
            <person name="Piazza S."/>
            <person name="Reed J."/>
            <person name="Reid J.F."/>
            <person name="Ring B.Z."/>
            <person name="Ringwald M."/>
            <person name="Rost B."/>
            <person name="Ruan Y."/>
            <person name="Salzberg S.L."/>
            <person name="Sandelin A."/>
            <person name="Schneider C."/>
            <person name="Schoenbach C."/>
            <person name="Sekiguchi K."/>
            <person name="Semple C.A."/>
            <person name="Seno S."/>
            <person name="Sessa L."/>
            <person name="Sheng Y."/>
            <person name="Shibata Y."/>
            <person name="Shimada H."/>
            <person name="Shimada K."/>
            <person name="Silva D."/>
            <person name="Sinclair B."/>
            <person name="Sperling S."/>
            <person name="Stupka E."/>
            <person name="Sugiura K."/>
            <person name="Sultana R."/>
            <person name="Takenaka Y."/>
            <person name="Taki K."/>
            <person name="Tammoja K."/>
            <person name="Tan S.L."/>
            <person name="Tang S."/>
            <person name="Taylor M.S."/>
            <person name="Tegner J."/>
            <person name="Teichmann S.A."/>
            <person name="Ueda H.R."/>
            <person name="van Nimwegen E."/>
            <person name="Verardo R."/>
            <person name="Wei C.L."/>
            <person name="Yagi K."/>
            <person name="Yamanishi H."/>
            <person name="Zabarovsky E."/>
            <person name="Zhu S."/>
            <person name="Zimmer A."/>
            <person name="Hide W."/>
            <person name="Bult C."/>
            <person name="Grimmond S.M."/>
            <person name="Teasdale R.D."/>
            <person name="Liu E.T."/>
            <person name="Brusic V."/>
            <person name="Quackenbush J."/>
            <person name="Wahlestedt C."/>
            <person name="Mattick J.S."/>
            <person name="Hume D.A."/>
            <person name="Kai C."/>
            <person name="Sasaki D."/>
            <person name="Tomaru Y."/>
            <person name="Fukuda S."/>
            <person name="Kanamori-Katayama M."/>
            <person name="Suzuki M."/>
            <person name="Aoki J."/>
            <person name="Arakawa T."/>
            <person name="Iida J."/>
            <person name="Imamura K."/>
            <person name="Itoh M."/>
            <person name="Kato T."/>
            <person name="Kawaji H."/>
            <person name="Kawagashira N."/>
            <person name="Kawashima T."/>
            <person name="Kojima M."/>
            <person name="Kondo S."/>
            <person name="Konno H."/>
            <person name="Nakano K."/>
            <person name="Ninomiya N."/>
            <person name="Nishio T."/>
            <person name="Okada M."/>
            <person name="Plessy C."/>
            <person name="Shibata K."/>
            <person name="Shiraki T."/>
            <person name="Suzuki S."/>
            <person name="Tagami M."/>
            <person name="Waki K."/>
            <person name="Watahiki A."/>
            <person name="Okamura-Oho Y."/>
            <person name="Suzuki H."/>
            <person name="Kawai J."/>
            <person name="Hayashizaki Y."/>
        </authorList>
    </citation>
    <scope>NUCLEOTIDE SEQUENCE [LARGE SCALE MRNA]</scope>
    <source>
        <strain>C57BL/6J</strain>
        <tissue>Heart</tissue>
        <tissue>Kidney</tissue>
    </source>
</reference>
<reference key="2">
    <citation type="journal article" date="2004" name="Genome Res.">
        <title>The status, quality, and expansion of the NIH full-length cDNA project: the Mammalian Gene Collection (MGC).</title>
        <authorList>
            <consortium name="The MGC Project Team"/>
        </authorList>
    </citation>
    <scope>NUCLEOTIDE SEQUENCE [LARGE SCALE MRNA]</scope>
    <source>
        <tissue>Colon</tissue>
    </source>
</reference>
<reference key="3">
    <citation type="journal article" date="2010" name="Cell">
        <title>A tissue-specific atlas of mouse protein phosphorylation and expression.</title>
        <authorList>
            <person name="Huttlin E.L."/>
            <person name="Jedrychowski M.P."/>
            <person name="Elias J.E."/>
            <person name="Goswami T."/>
            <person name="Rad R."/>
            <person name="Beausoleil S.A."/>
            <person name="Villen J."/>
            <person name="Haas W."/>
            <person name="Sowa M.E."/>
            <person name="Gygi S.P."/>
        </authorList>
    </citation>
    <scope>PHOSPHORYLATION [LARGE SCALE ANALYSIS] AT SER-28</scope>
    <scope>IDENTIFICATION BY MASS SPECTROMETRY [LARGE SCALE ANALYSIS]</scope>
    <source>
        <tissue>Brain</tissue>
        <tissue>Brown adipose tissue</tissue>
        <tissue>Heart</tissue>
        <tissue>Kidney</tissue>
        <tissue>Lung</tissue>
        <tissue>Spleen</tissue>
    </source>
</reference>
<comment type="function">
    <text evidence="1">Catalyzes the irreversible NADPH-dependent deamination of GMP to IMP. It functions in the conversion of nucleobase, nucleoside and nucleotide derivatives of G to A nucleotides, and in maintaining the intracellular balance of A and G nucleotides.</text>
</comment>
<comment type="catalytic activity">
    <reaction evidence="1">
        <text>IMP + NH4(+) + NADP(+) = GMP + NADPH + 2 H(+)</text>
        <dbReference type="Rhea" id="RHEA:17185"/>
        <dbReference type="ChEBI" id="CHEBI:15378"/>
        <dbReference type="ChEBI" id="CHEBI:28938"/>
        <dbReference type="ChEBI" id="CHEBI:57783"/>
        <dbReference type="ChEBI" id="CHEBI:58053"/>
        <dbReference type="ChEBI" id="CHEBI:58115"/>
        <dbReference type="ChEBI" id="CHEBI:58349"/>
        <dbReference type="EC" id="1.7.1.7"/>
    </reaction>
</comment>
<comment type="subunit">
    <text evidence="1">Homotetramer.</text>
</comment>
<comment type="similarity">
    <text evidence="1">Belongs to the IMPDH/GMPR family. GuaC type 1 subfamily.</text>
</comment>
<keyword id="KW-0479">Metal-binding</keyword>
<keyword id="KW-0521">NADP</keyword>
<keyword id="KW-0560">Oxidoreductase</keyword>
<keyword id="KW-0597">Phosphoprotein</keyword>
<keyword id="KW-0630">Potassium</keyword>
<keyword id="KW-0659">Purine metabolism</keyword>
<keyword id="KW-1185">Reference proteome</keyword>
<evidence type="ECO:0000255" key="1">
    <source>
        <dbReference type="HAMAP-Rule" id="MF_03195"/>
    </source>
</evidence>
<evidence type="ECO:0007744" key="2">
    <source>
    </source>
</evidence>
<name>GMPR1_MOUSE</name>
<organism>
    <name type="scientific">Mus musculus</name>
    <name type="common">Mouse</name>
    <dbReference type="NCBI Taxonomy" id="10090"/>
    <lineage>
        <taxon>Eukaryota</taxon>
        <taxon>Metazoa</taxon>
        <taxon>Chordata</taxon>
        <taxon>Craniata</taxon>
        <taxon>Vertebrata</taxon>
        <taxon>Euteleostomi</taxon>
        <taxon>Mammalia</taxon>
        <taxon>Eutheria</taxon>
        <taxon>Euarchontoglires</taxon>
        <taxon>Glires</taxon>
        <taxon>Rodentia</taxon>
        <taxon>Myomorpha</taxon>
        <taxon>Muroidea</taxon>
        <taxon>Muridae</taxon>
        <taxon>Murinae</taxon>
        <taxon>Mus</taxon>
        <taxon>Mus</taxon>
    </lineage>
</organism>
<feature type="chain" id="PRO_0000093724" description="GMP reductase 1">
    <location>
        <begin position="1"/>
        <end position="345"/>
    </location>
</feature>
<feature type="active site" description="Thioimidate intermediate" evidence="1">
    <location>
        <position position="186"/>
    </location>
</feature>
<feature type="active site" description="Proton donor/acceptor" evidence="1">
    <location>
        <position position="188"/>
    </location>
</feature>
<feature type="binding site" evidence="1">
    <location>
        <begin position="26"/>
        <end position="27"/>
    </location>
    <ligand>
        <name>NADP(+)</name>
        <dbReference type="ChEBI" id="CHEBI:58349"/>
        <note>ligand shared between two neighboring subunits</note>
    </ligand>
</feature>
<feature type="binding site" description="in other chain" evidence="1">
    <location>
        <position position="78"/>
    </location>
    <ligand>
        <name>NADP(+)</name>
        <dbReference type="ChEBI" id="CHEBI:58349"/>
        <note>ligand shared between two neighboring subunits</note>
    </ligand>
</feature>
<feature type="binding site" description="in other chain" evidence="1">
    <location>
        <begin position="129"/>
        <end position="131"/>
    </location>
    <ligand>
        <name>NADP(+)</name>
        <dbReference type="ChEBI" id="CHEBI:58349"/>
        <note>ligand shared between two neighboring subunits</note>
    </ligand>
</feature>
<feature type="binding site" description="in other chain" evidence="1">
    <location>
        <begin position="180"/>
        <end position="181"/>
    </location>
    <ligand>
        <name>NADP(+)</name>
        <dbReference type="ChEBI" id="CHEBI:58349"/>
        <note>ligand shared between two neighboring subunits</note>
    </ligand>
</feature>
<feature type="binding site" evidence="1">
    <location>
        <position position="181"/>
    </location>
    <ligand>
        <name>K(+)</name>
        <dbReference type="ChEBI" id="CHEBI:29103"/>
    </ligand>
</feature>
<feature type="binding site" evidence="1">
    <location>
        <position position="183"/>
    </location>
    <ligand>
        <name>K(+)</name>
        <dbReference type="ChEBI" id="CHEBI:29103"/>
    </ligand>
</feature>
<feature type="binding site" evidence="1">
    <location>
        <position position="186"/>
    </location>
    <ligand>
        <name>K(+)</name>
        <dbReference type="ChEBI" id="CHEBI:29103"/>
    </ligand>
</feature>
<feature type="binding site" evidence="1">
    <location>
        <position position="189"/>
    </location>
    <ligand>
        <name>K(+)</name>
        <dbReference type="ChEBI" id="CHEBI:29103"/>
    </ligand>
</feature>
<feature type="binding site" evidence="1">
    <location>
        <begin position="219"/>
        <end position="221"/>
    </location>
    <ligand>
        <name>GMP</name>
        <dbReference type="ChEBI" id="CHEBI:58115"/>
    </ligand>
</feature>
<feature type="binding site" evidence="1">
    <location>
        <begin position="242"/>
        <end position="243"/>
    </location>
    <ligand>
        <name>GMP</name>
        <dbReference type="ChEBI" id="CHEBI:58115"/>
    </ligand>
</feature>
<feature type="binding site" evidence="1">
    <location>
        <begin position="268"/>
        <end position="270"/>
    </location>
    <ligand>
        <name>GMP</name>
        <dbReference type="ChEBI" id="CHEBI:58115"/>
    </ligand>
</feature>
<feature type="binding site" description="in other chain" evidence="1">
    <location>
        <position position="269"/>
    </location>
    <ligand>
        <name>NADP(+)</name>
        <dbReference type="ChEBI" id="CHEBI:58349"/>
        <note>ligand shared between two neighboring subunits</note>
    </ligand>
</feature>
<feature type="binding site" description="in other chain" evidence="1">
    <location>
        <begin position="285"/>
        <end position="286"/>
    </location>
    <ligand>
        <name>NADP(+)</name>
        <dbReference type="ChEBI" id="CHEBI:58349"/>
        <note>ligand shared between two neighboring subunits</note>
    </ligand>
</feature>
<feature type="binding site" evidence="1">
    <location>
        <begin position="286"/>
        <end position="290"/>
    </location>
    <ligand>
        <name>GMP</name>
        <dbReference type="ChEBI" id="CHEBI:58115"/>
    </ligand>
</feature>
<feature type="binding site" evidence="1">
    <location>
        <begin position="314"/>
        <end position="317"/>
    </location>
    <ligand>
        <name>NADP(+)</name>
        <dbReference type="ChEBI" id="CHEBI:58349"/>
        <note>ligand shared between two neighboring subunits</note>
    </ligand>
</feature>
<feature type="modified residue" description="Phosphoserine" evidence="2">
    <location>
        <position position="28"/>
    </location>
</feature>
<protein>
    <recommendedName>
        <fullName evidence="1">GMP reductase 1</fullName>
        <shortName evidence="1">GMPR 1</shortName>
        <ecNumber evidence="1">1.7.1.7</ecNumber>
    </recommendedName>
    <alternativeName>
        <fullName evidence="1">Guanosine 5'-monophosphate oxidoreductase 1</fullName>
        <shortName evidence="1">Guanosine monophosphate reductase 1</shortName>
    </alternativeName>
</protein>
<accession>Q9DCZ1</accession>
<sequence length="345" mass="37482">MPRIDADLKLDFKDVLLRPKRSSLKSRSEVDLERTFTFRNSKQTYSGIPIIVANMDTVGTFEMAVVMSQHAMFTAVHKHYSLDDWKCFAETHPECLQHVAVSSGSGQNDLERMSRILEAVPQVKFICLDVANGYSEHFVEFVKLVRSKFPEHTIMAGNVVTGEMVEELILSGADIIKVGVGPGSVCTTRTKTGVGYPQLSAVIECADSAHGLKGHIISDGGCTCPGDVAKAFGAGADFVMLGGMFSGHTECAGEVIERNGQKLKLFYGMSSDTAMKKHAGGVAEYRASEGKTVEVPYKGDVENTILDILGGLRSTCTYVGAAKLKELSRRATFIRVTQQHNTVFG</sequence>